<dbReference type="EC" id="2.1.1.174" evidence="1"/>
<dbReference type="EMBL" id="CP000243">
    <property type="protein sequence ID" value="ABE08968.1"/>
    <property type="molecule type" value="Genomic_DNA"/>
</dbReference>
<dbReference type="RefSeq" id="WP_000018671.1">
    <property type="nucleotide sequence ID" value="NZ_CP064825.1"/>
</dbReference>
<dbReference type="SMR" id="Q1R6P6"/>
<dbReference type="GeneID" id="86947959"/>
<dbReference type="KEGG" id="eci:UTI89_C3522"/>
<dbReference type="HOGENOM" id="CLU_040288_4_0_6"/>
<dbReference type="Proteomes" id="UP000001952">
    <property type="component" value="Chromosome"/>
</dbReference>
<dbReference type="GO" id="GO:0005737">
    <property type="term" value="C:cytoplasm"/>
    <property type="evidence" value="ECO:0007669"/>
    <property type="project" value="UniProtKB-SubCell"/>
</dbReference>
<dbReference type="GO" id="GO:0052916">
    <property type="term" value="F:23S rRNA (guanine(1835)-N(2))-methyltransferase activity"/>
    <property type="evidence" value="ECO:0007669"/>
    <property type="project" value="UniProtKB-EC"/>
</dbReference>
<dbReference type="GO" id="GO:0003676">
    <property type="term" value="F:nucleic acid binding"/>
    <property type="evidence" value="ECO:0007669"/>
    <property type="project" value="InterPro"/>
</dbReference>
<dbReference type="CDD" id="cd02440">
    <property type="entry name" value="AdoMet_MTases"/>
    <property type="match status" value="1"/>
</dbReference>
<dbReference type="FunFam" id="3.40.50.150:FF:000046">
    <property type="entry name" value="Ribosomal RNA large subunit methyltransferase G"/>
    <property type="match status" value="1"/>
</dbReference>
<dbReference type="FunFam" id="3.40.50.150:FF:000047">
    <property type="entry name" value="Ribosomal RNA large subunit methyltransferase G"/>
    <property type="match status" value="1"/>
</dbReference>
<dbReference type="Gene3D" id="3.40.50.150">
    <property type="entry name" value="Vaccinia Virus protein VP39"/>
    <property type="match status" value="2"/>
</dbReference>
<dbReference type="HAMAP" id="MF_01859">
    <property type="entry name" value="23SrRNA_methyltr_G"/>
    <property type="match status" value="1"/>
</dbReference>
<dbReference type="InterPro" id="IPR002052">
    <property type="entry name" value="DNA_methylase_N6_adenine_CS"/>
</dbReference>
<dbReference type="InterPro" id="IPR017237">
    <property type="entry name" value="rRNA_m2G-MeTrfase_RlmG"/>
</dbReference>
<dbReference type="InterPro" id="IPR046977">
    <property type="entry name" value="RsmC/RlmG"/>
</dbReference>
<dbReference type="InterPro" id="IPR029063">
    <property type="entry name" value="SAM-dependent_MTases_sf"/>
</dbReference>
<dbReference type="InterPro" id="IPR007848">
    <property type="entry name" value="Small_mtfrase_dom"/>
</dbReference>
<dbReference type="NCBIfam" id="NF011577">
    <property type="entry name" value="PRK15001.1"/>
    <property type="match status" value="1"/>
</dbReference>
<dbReference type="PANTHER" id="PTHR47816:SF5">
    <property type="entry name" value="RIBOSOMAL RNA LARGE SUBUNIT METHYLTRANSFERASE G"/>
    <property type="match status" value="1"/>
</dbReference>
<dbReference type="PANTHER" id="PTHR47816">
    <property type="entry name" value="RIBOSOMAL RNA SMALL SUBUNIT METHYLTRANSFERASE C"/>
    <property type="match status" value="1"/>
</dbReference>
<dbReference type="Pfam" id="PF05175">
    <property type="entry name" value="MTS"/>
    <property type="match status" value="1"/>
</dbReference>
<dbReference type="PIRSF" id="PIRSF037565">
    <property type="entry name" value="RRNA_m2G_Mtase_RsmD_prd"/>
    <property type="match status" value="1"/>
</dbReference>
<dbReference type="SUPFAM" id="SSF53335">
    <property type="entry name" value="S-adenosyl-L-methionine-dependent methyltransferases"/>
    <property type="match status" value="1"/>
</dbReference>
<organism>
    <name type="scientific">Escherichia coli (strain UTI89 / UPEC)</name>
    <dbReference type="NCBI Taxonomy" id="364106"/>
    <lineage>
        <taxon>Bacteria</taxon>
        <taxon>Pseudomonadati</taxon>
        <taxon>Pseudomonadota</taxon>
        <taxon>Gammaproteobacteria</taxon>
        <taxon>Enterobacterales</taxon>
        <taxon>Enterobacteriaceae</taxon>
        <taxon>Escherichia</taxon>
    </lineage>
</organism>
<evidence type="ECO:0000255" key="1">
    <source>
        <dbReference type="HAMAP-Rule" id="MF_01859"/>
    </source>
</evidence>
<reference key="1">
    <citation type="journal article" date="2006" name="Proc. Natl. Acad. Sci. U.S.A.">
        <title>Identification of genes subject to positive selection in uropathogenic strains of Escherichia coli: a comparative genomics approach.</title>
        <authorList>
            <person name="Chen S.L."/>
            <person name="Hung C.-S."/>
            <person name="Xu J."/>
            <person name="Reigstad C.S."/>
            <person name="Magrini V."/>
            <person name="Sabo A."/>
            <person name="Blasiar D."/>
            <person name="Bieri T."/>
            <person name="Meyer R.R."/>
            <person name="Ozersky P."/>
            <person name="Armstrong J.R."/>
            <person name="Fulton R.S."/>
            <person name="Latreille J.P."/>
            <person name="Spieth J."/>
            <person name="Hooton T.M."/>
            <person name="Mardis E.R."/>
            <person name="Hultgren S.J."/>
            <person name="Gordon J.I."/>
        </authorList>
    </citation>
    <scope>NUCLEOTIDE SEQUENCE [LARGE SCALE GENOMIC DNA]</scope>
    <source>
        <strain>UTI89 / UPEC</strain>
    </source>
</reference>
<gene>
    <name evidence="1" type="primary">rlmG</name>
    <name type="ordered locus">UTI89_C3522</name>
</gene>
<keyword id="KW-0963">Cytoplasm</keyword>
<keyword id="KW-0489">Methyltransferase</keyword>
<keyword id="KW-0698">rRNA processing</keyword>
<keyword id="KW-0949">S-adenosyl-L-methionine</keyword>
<keyword id="KW-0808">Transferase</keyword>
<name>RLMG_ECOUT</name>
<accession>Q1R6P6</accession>
<comment type="function">
    <text evidence="1">Specifically methylates the guanine in position 1835 (m2G1835) of 23S rRNA.</text>
</comment>
<comment type="catalytic activity">
    <reaction evidence="1">
        <text>guanosine(1835) in 23S rRNA + S-adenosyl-L-methionine = N(2)-methylguanosine(1835) in 23S rRNA + S-adenosyl-L-homocysteine + H(+)</text>
        <dbReference type="Rhea" id="RHEA:42744"/>
        <dbReference type="Rhea" id="RHEA-COMP:10217"/>
        <dbReference type="Rhea" id="RHEA-COMP:10218"/>
        <dbReference type="ChEBI" id="CHEBI:15378"/>
        <dbReference type="ChEBI" id="CHEBI:57856"/>
        <dbReference type="ChEBI" id="CHEBI:59789"/>
        <dbReference type="ChEBI" id="CHEBI:74269"/>
        <dbReference type="ChEBI" id="CHEBI:74481"/>
        <dbReference type="EC" id="2.1.1.174"/>
    </reaction>
</comment>
<comment type="subcellular location">
    <subcellularLocation>
        <location evidence="1">Cytoplasm</location>
    </subcellularLocation>
</comment>
<comment type="similarity">
    <text evidence="1">Belongs to the methyltransferase superfamily. RlmG family.</text>
</comment>
<proteinExistence type="inferred from homology"/>
<sequence>MSHLDNGFRSLTLQRFPATDDVNPLQAWEAADEYLLQQLDDTEIRGPVLILNDAFGALSCALAEHKPYSIGDSYISELATRENLRLNGIDESSVKFLDSTADYPQQPGVVLIKVPKTLALLEQQLRALRKVVTPDTRIIAGAKARDIHTSTLELFEKVLGPTTTTLAWKKARLINCTFNEPPLADAPQTVSWKLEGTDWTIHNHANVFSRTGLDIGARFFMQHLPENLEGEIVDLGCGNGVIGLTLLDKNPQAKVVFVDESPMAVASSRLNVETNMPEALDRCEFMINNALSGVEPFRFNAVLCNPPFHQQHALTDNVAWEMFHHARRCLKINGELYIVANRHLDYFHKLKKIFGNCTTIATNNKFVVLKAVKLGRRR</sequence>
<feature type="chain" id="PRO_0000366458" description="Ribosomal RNA large subunit methyltransferase G">
    <location>
        <begin position="1"/>
        <end position="378"/>
    </location>
</feature>
<protein>
    <recommendedName>
        <fullName evidence="1">Ribosomal RNA large subunit methyltransferase G</fullName>
        <ecNumber evidence="1">2.1.1.174</ecNumber>
    </recommendedName>
    <alternativeName>
        <fullName evidence="1">23S rRNA m2G1835 methyltransferase</fullName>
    </alternativeName>
    <alternativeName>
        <fullName evidence="1">rRNA (guanine-N(2)-)-methyltransferase RlmG</fullName>
    </alternativeName>
</protein>